<proteinExistence type="inferred from homology"/>
<gene>
    <name type="primary">NUR1</name>
    <name type="ordered locus">CAGL0L07084g</name>
</gene>
<comment type="function">
    <text evidence="1">Member of a perinuclear network that controls recombination at multiple loci to maintain genome stability. Required for rDNA repeat stability (By similarity).</text>
</comment>
<comment type="subcellular location">
    <subcellularLocation>
        <location evidence="1">Nucleus membrane</location>
        <topology evidence="1">Multi-pass membrane protein</topology>
    </subcellularLocation>
</comment>
<comment type="similarity">
    <text evidence="4">Belongs to the NUR1 family.</text>
</comment>
<name>NUR1_CANGA</name>
<sequence>MFSWLIPDIPELFLTISVWFRLQGWEDNTKLGFIIGNTLTTIFYILRLAQDTLLAGVSRKLIRDYELFDLSKSETLLSDPAFSSYHDVLFNKHHSTANASSYNKRVRKVTSTVYWSTYFLLLLSCYTCYRLFNTYKVYRIYYLKDLNLDKHPSLKKIEPDYEVDEKLLKTSLKSKLLSRFIRLLQLQDEVETELPKVTEHYTLNKWDPSKLIISLSTSFSPTIIICLMYTNVTFLTVIPIIIHQGIFYFMIWNRYEERFKDDALLMRENYLQYDTKYVKPLKQIMYQDVMTDTATISDGGFTKFFPVSKSTLFKHHEMSGDVIIERYNKKSREFENVTDIIKPHHHINNTVKILPPTIRKDHKTNRYDHRQQSILKDRKFNIDSNEPQIINALTTAIPSRSFFNNNPSGSNDDNCSGIKVRSSPTRETFFPATPLRKK</sequence>
<protein>
    <recommendedName>
        <fullName>Nuclear rim protein 1</fullName>
    </recommendedName>
</protein>
<reference key="1">
    <citation type="journal article" date="2004" name="Nature">
        <title>Genome evolution in yeasts.</title>
        <authorList>
            <person name="Dujon B."/>
            <person name="Sherman D."/>
            <person name="Fischer G."/>
            <person name="Durrens P."/>
            <person name="Casaregola S."/>
            <person name="Lafontaine I."/>
            <person name="de Montigny J."/>
            <person name="Marck C."/>
            <person name="Neuveglise C."/>
            <person name="Talla E."/>
            <person name="Goffard N."/>
            <person name="Frangeul L."/>
            <person name="Aigle M."/>
            <person name="Anthouard V."/>
            <person name="Babour A."/>
            <person name="Barbe V."/>
            <person name="Barnay S."/>
            <person name="Blanchin S."/>
            <person name="Beckerich J.-M."/>
            <person name="Beyne E."/>
            <person name="Bleykasten C."/>
            <person name="Boisrame A."/>
            <person name="Boyer J."/>
            <person name="Cattolico L."/>
            <person name="Confanioleri F."/>
            <person name="de Daruvar A."/>
            <person name="Despons L."/>
            <person name="Fabre E."/>
            <person name="Fairhead C."/>
            <person name="Ferry-Dumazet H."/>
            <person name="Groppi A."/>
            <person name="Hantraye F."/>
            <person name="Hennequin C."/>
            <person name="Jauniaux N."/>
            <person name="Joyet P."/>
            <person name="Kachouri R."/>
            <person name="Kerrest A."/>
            <person name="Koszul R."/>
            <person name="Lemaire M."/>
            <person name="Lesur I."/>
            <person name="Ma L."/>
            <person name="Muller H."/>
            <person name="Nicaud J.-M."/>
            <person name="Nikolski M."/>
            <person name="Oztas S."/>
            <person name="Ozier-Kalogeropoulos O."/>
            <person name="Pellenz S."/>
            <person name="Potier S."/>
            <person name="Richard G.-F."/>
            <person name="Straub M.-L."/>
            <person name="Suleau A."/>
            <person name="Swennen D."/>
            <person name="Tekaia F."/>
            <person name="Wesolowski-Louvel M."/>
            <person name="Westhof E."/>
            <person name="Wirth B."/>
            <person name="Zeniou-Meyer M."/>
            <person name="Zivanovic Y."/>
            <person name="Bolotin-Fukuhara M."/>
            <person name="Thierry A."/>
            <person name="Bouchier C."/>
            <person name="Caudron B."/>
            <person name="Scarpelli C."/>
            <person name="Gaillardin C."/>
            <person name="Weissenbach J."/>
            <person name="Wincker P."/>
            <person name="Souciet J.-L."/>
        </authorList>
    </citation>
    <scope>NUCLEOTIDE SEQUENCE [LARGE SCALE GENOMIC DNA]</scope>
    <source>
        <strain>ATCC 2001 / BCRC 20586 / JCM 3761 / NBRC 0622 / NRRL Y-65 / CBS 138</strain>
    </source>
</reference>
<accession>Q6FL09</accession>
<organism>
    <name type="scientific">Candida glabrata (strain ATCC 2001 / BCRC 20586 / JCM 3761 / NBRC 0622 / NRRL Y-65 / CBS 138)</name>
    <name type="common">Yeast</name>
    <name type="synonym">Nakaseomyces glabratus</name>
    <dbReference type="NCBI Taxonomy" id="284593"/>
    <lineage>
        <taxon>Eukaryota</taxon>
        <taxon>Fungi</taxon>
        <taxon>Dikarya</taxon>
        <taxon>Ascomycota</taxon>
        <taxon>Saccharomycotina</taxon>
        <taxon>Saccharomycetes</taxon>
        <taxon>Saccharomycetales</taxon>
        <taxon>Saccharomycetaceae</taxon>
        <taxon>Nakaseomyces</taxon>
    </lineage>
</organism>
<dbReference type="EMBL" id="CR380958">
    <property type="protein sequence ID" value="CAG62055.1"/>
    <property type="molecule type" value="Genomic_DNA"/>
</dbReference>
<dbReference type="RefSeq" id="XP_449085.1">
    <property type="nucleotide sequence ID" value="XM_449085.1"/>
</dbReference>
<dbReference type="FunCoup" id="Q6FL09">
    <property type="interactions" value="36"/>
</dbReference>
<dbReference type="STRING" id="284593.Q6FL09"/>
<dbReference type="EnsemblFungi" id="CAGL0L07084g-T">
    <property type="protein sequence ID" value="CAGL0L07084g-T-p1"/>
    <property type="gene ID" value="CAGL0L07084g"/>
</dbReference>
<dbReference type="KEGG" id="cgr:2890830"/>
<dbReference type="CGD" id="CAL0136192">
    <property type="gene designation" value="CAGL0L07084g"/>
</dbReference>
<dbReference type="VEuPathDB" id="FungiDB:CAGL0L07084g"/>
<dbReference type="eggNOG" id="ENOG502S7S0">
    <property type="taxonomic scope" value="Eukaryota"/>
</dbReference>
<dbReference type="HOGENOM" id="CLU_625555_0_0_1"/>
<dbReference type="InParanoid" id="Q6FL09"/>
<dbReference type="OMA" id="LENTHWS"/>
<dbReference type="Proteomes" id="UP000002428">
    <property type="component" value="Chromosome L"/>
</dbReference>
<dbReference type="GO" id="GO:0031965">
    <property type="term" value="C:nuclear membrane"/>
    <property type="evidence" value="ECO:0007669"/>
    <property type="project" value="UniProtKB-SubCell"/>
</dbReference>
<dbReference type="GO" id="GO:0043007">
    <property type="term" value="P:maintenance of rDNA"/>
    <property type="evidence" value="ECO:0007669"/>
    <property type="project" value="TreeGrafter"/>
</dbReference>
<dbReference type="GO" id="GO:0007096">
    <property type="term" value="P:regulation of exit from mitosis"/>
    <property type="evidence" value="ECO:0007669"/>
    <property type="project" value="TreeGrafter"/>
</dbReference>
<dbReference type="InterPro" id="IPR018819">
    <property type="entry name" value="Nur1/Mug154"/>
</dbReference>
<dbReference type="PANTHER" id="PTHR28293">
    <property type="entry name" value="NUCLEAR RIM PROTEIN 1"/>
    <property type="match status" value="1"/>
</dbReference>
<dbReference type="PANTHER" id="PTHR28293:SF1">
    <property type="entry name" value="NUCLEAR RIM PROTEIN 1"/>
    <property type="match status" value="1"/>
</dbReference>
<dbReference type="Pfam" id="PF10332">
    <property type="entry name" value="DUF2418"/>
    <property type="match status" value="1"/>
</dbReference>
<feature type="chain" id="PRO_0000409028" description="Nuclear rim protein 1">
    <location>
        <begin position="1"/>
        <end position="438"/>
    </location>
</feature>
<feature type="transmembrane region" description="Helical" evidence="2">
    <location>
        <begin position="109"/>
        <end position="129"/>
    </location>
</feature>
<feature type="transmembrane region" description="Helical" evidence="2">
    <location>
        <begin position="219"/>
        <end position="241"/>
    </location>
</feature>
<feature type="region of interest" description="Disordered" evidence="3">
    <location>
        <begin position="405"/>
        <end position="438"/>
    </location>
</feature>
<feature type="compositionally biased region" description="Polar residues" evidence="3">
    <location>
        <begin position="405"/>
        <end position="414"/>
    </location>
</feature>
<evidence type="ECO:0000250" key="1"/>
<evidence type="ECO:0000255" key="2"/>
<evidence type="ECO:0000256" key="3">
    <source>
        <dbReference type="SAM" id="MobiDB-lite"/>
    </source>
</evidence>
<evidence type="ECO:0000305" key="4"/>
<keyword id="KW-0472">Membrane</keyword>
<keyword id="KW-0539">Nucleus</keyword>
<keyword id="KW-1185">Reference proteome</keyword>
<keyword id="KW-0812">Transmembrane</keyword>
<keyword id="KW-1133">Transmembrane helix</keyword>